<reference key="1">
    <citation type="journal article" date="2003" name="FEBS Lett.">
        <title>ArhGAP15, a novel human RacGAP protein with GTPase binding property.</title>
        <authorList>
            <person name="Seoh M.L."/>
            <person name="Ng C.H."/>
            <person name="Yong J."/>
            <person name="Lim L."/>
            <person name="Leung T."/>
        </authorList>
    </citation>
    <scope>NUCLEOTIDE SEQUENCE [MRNA]</scope>
    <scope>FUNCTION</scope>
    <scope>SUBCELLULAR LOCATION</scope>
    <scope>DOMAIN PH</scope>
    <scope>TISSUE SPECIFICITY</scope>
</reference>
<reference key="2">
    <citation type="journal article" date="2000" name="Genome Res.">
        <title>Cloning and functional analysis of cDNAs with open reading frames for 300 previously undefined genes expressed in CD34+ hematopoietic stem/progenitor cells.</title>
        <authorList>
            <person name="Zhang Q.-H."/>
            <person name="Ye M."/>
            <person name="Wu X.-Y."/>
            <person name="Ren S.-X."/>
            <person name="Zhao M."/>
            <person name="Zhao C.-J."/>
            <person name="Fu G."/>
            <person name="Shen Y."/>
            <person name="Fan H.-Y."/>
            <person name="Lu G."/>
            <person name="Zhong M."/>
            <person name="Xu X.-R."/>
            <person name="Han Z.-G."/>
            <person name="Zhang J.-W."/>
            <person name="Tao J."/>
            <person name="Huang Q.-H."/>
            <person name="Zhou J."/>
            <person name="Hu G.-X."/>
            <person name="Gu J."/>
            <person name="Chen S.-J."/>
            <person name="Chen Z."/>
        </authorList>
    </citation>
    <scope>NUCLEOTIDE SEQUENCE [LARGE SCALE MRNA]</scope>
    <source>
        <tissue>Bone marrow</tissue>
    </source>
</reference>
<reference key="3">
    <citation type="submission" date="2005-09" db="EMBL/GenBank/DDBJ databases">
        <authorList>
            <person name="Mural R.J."/>
            <person name="Istrail S."/>
            <person name="Sutton G.G."/>
            <person name="Florea L."/>
            <person name="Halpern A.L."/>
            <person name="Mobarry C.M."/>
            <person name="Lippert R."/>
            <person name="Walenz B."/>
            <person name="Shatkay H."/>
            <person name="Dew I."/>
            <person name="Miller J.R."/>
            <person name="Flanigan M.J."/>
            <person name="Edwards N.J."/>
            <person name="Bolanos R."/>
            <person name="Fasulo D."/>
            <person name="Halldorsson B.V."/>
            <person name="Hannenhalli S."/>
            <person name="Turner R."/>
            <person name="Yooseph S."/>
            <person name="Lu F."/>
            <person name="Nusskern D.R."/>
            <person name="Shue B.C."/>
            <person name="Zheng X.H."/>
            <person name="Zhong F."/>
            <person name="Delcher A.L."/>
            <person name="Huson D.H."/>
            <person name="Kravitz S.A."/>
            <person name="Mouchard L."/>
            <person name="Reinert K."/>
            <person name="Remington K.A."/>
            <person name="Clark A.G."/>
            <person name="Waterman M.S."/>
            <person name="Eichler E.E."/>
            <person name="Adams M.D."/>
            <person name="Hunkapiller M.W."/>
            <person name="Myers E.W."/>
            <person name="Venter J.C."/>
        </authorList>
    </citation>
    <scope>NUCLEOTIDE SEQUENCE [LARGE SCALE GENOMIC DNA]</scope>
</reference>
<reference key="4">
    <citation type="journal article" date="2004" name="Genome Res.">
        <title>The status, quality, and expansion of the NIH full-length cDNA project: the Mammalian Gene Collection (MGC).</title>
        <authorList>
            <consortium name="The MGC Project Team"/>
        </authorList>
    </citation>
    <scope>NUCLEOTIDE SEQUENCE [LARGE SCALE MRNA]</scope>
    <source>
        <tissue>Bone marrow</tissue>
        <tissue>Lymph</tissue>
    </source>
</reference>
<reference key="5">
    <citation type="journal article" date="2009" name="Sci. Signal.">
        <title>Quantitative phosphoproteomic analysis of T cell receptor signaling reveals system-wide modulation of protein-protein interactions.</title>
        <authorList>
            <person name="Mayya V."/>
            <person name="Lundgren D.H."/>
            <person name="Hwang S.-I."/>
            <person name="Rezaul K."/>
            <person name="Wu L."/>
            <person name="Eng J.K."/>
            <person name="Rodionov V."/>
            <person name="Han D.K."/>
        </authorList>
    </citation>
    <scope>PHOSPHORYLATION [LARGE SCALE ANALYSIS] AT SER-43 AND SER-103</scope>
    <scope>IDENTIFICATION BY MASS SPECTROMETRY [LARGE SCALE ANALYSIS]</scope>
    <source>
        <tissue>Leukemic T-cell</tissue>
    </source>
</reference>
<reference key="6">
    <citation type="journal article" date="2011" name="BMC Syst. Biol.">
        <title>Initial characterization of the human central proteome.</title>
        <authorList>
            <person name="Burkard T.R."/>
            <person name="Planyavsky M."/>
            <person name="Kaupe I."/>
            <person name="Breitwieser F.P."/>
            <person name="Buerckstuemmer T."/>
            <person name="Bennett K.L."/>
            <person name="Superti-Furga G."/>
            <person name="Colinge J."/>
        </authorList>
    </citation>
    <scope>IDENTIFICATION BY MASS SPECTROMETRY [LARGE SCALE ANALYSIS]</scope>
</reference>
<reference key="7">
    <citation type="journal article" date="2013" name="J. Proteome Res.">
        <title>Toward a comprehensive characterization of a human cancer cell phosphoproteome.</title>
        <authorList>
            <person name="Zhou H."/>
            <person name="Di Palma S."/>
            <person name="Preisinger C."/>
            <person name="Peng M."/>
            <person name="Polat A.N."/>
            <person name="Heck A.J."/>
            <person name="Mohammed S."/>
        </authorList>
    </citation>
    <scope>PHOSPHORYLATION [LARGE SCALE ANALYSIS] AT SER-43</scope>
    <scope>IDENTIFICATION BY MASS SPECTROMETRY [LARGE SCALE ANALYSIS]</scope>
    <source>
        <tissue>Erythroleukemia</tissue>
    </source>
</reference>
<reference key="8">
    <citation type="journal article" date="2014" name="J. Proteomics">
        <title>An enzyme assisted RP-RPLC approach for in-depth analysis of human liver phosphoproteome.</title>
        <authorList>
            <person name="Bian Y."/>
            <person name="Song C."/>
            <person name="Cheng K."/>
            <person name="Dong M."/>
            <person name="Wang F."/>
            <person name="Huang J."/>
            <person name="Sun D."/>
            <person name="Wang L."/>
            <person name="Ye M."/>
            <person name="Zou H."/>
        </authorList>
    </citation>
    <scope>IDENTIFICATION BY MASS SPECTROMETRY [LARGE SCALE ANALYSIS]</scope>
    <source>
        <tissue>Liver</tissue>
    </source>
</reference>
<reference key="9">
    <citation type="submission" date="2011-07" db="PDB data bank">
        <title>Crystal structure of human Rho GTPase activating protein 15 (ARHGAP15).</title>
        <authorList>
            <consortium name="Structural genomics consortium (SGC)"/>
        </authorList>
    </citation>
    <scope>X-RAY CRYSTALLOGRAPHY (2.25 ANGSTROMS) OF 262-473</scope>
</reference>
<protein>
    <recommendedName>
        <fullName>Rho GTPase-activating protein 15</fullName>
    </recommendedName>
    <alternativeName>
        <fullName>ArhGAP15</fullName>
    </alternativeName>
    <alternativeName>
        <fullName>Rho-type GTPase-activating protein 15</fullName>
    </alternativeName>
</protein>
<proteinExistence type="evidence at protein level"/>
<name>RHG15_HUMAN</name>
<accession>Q53QZ3</accession>
<accession>Q53R36</accession>
<accession>Q53RD7</accession>
<accession>Q53RT6</accession>
<accession>Q53SX9</accession>
<accession>Q584N9</accession>
<accession>Q6PJE6</accession>
<accession>Q86WP1</accession>
<accession>Q8IXX1</accession>
<accession>Q9NRL8</accession>
<accession>Q9NZ77</accession>
<accession>Q9NZ91</accession>
<keyword id="KW-0002">3D-structure</keyword>
<keyword id="KW-0963">Cytoplasm</keyword>
<keyword id="KW-0343">GTPase activation</keyword>
<keyword id="KW-0472">Membrane</keyword>
<keyword id="KW-0597">Phosphoprotein</keyword>
<keyword id="KW-1267">Proteomics identification</keyword>
<keyword id="KW-1185">Reference proteome</keyword>
<comment type="function">
    <text evidence="6">GTPase activator for the Rho-type GTPases by converting them to an inactive GDP-bound state. Has activity toward RAC1. Overexpression results in an increase in actin stress fibers and cell contraction.</text>
</comment>
<comment type="interaction">
    <interactant intactId="EBI-2602539">
        <id>Q53QZ3</id>
    </interactant>
    <interactant intactId="EBI-741925">
        <id>P49366</id>
        <label>DHPS</label>
    </interactant>
    <organismsDiffer>false</organismsDiffer>
    <experiments>2</experiments>
</comment>
<comment type="subcellular location">
    <subcellularLocation>
        <location evidence="6">Cytoplasm</location>
    </subcellularLocation>
    <subcellularLocation>
        <location evidence="6">Membrane</location>
        <topology evidence="6">Peripheral membrane protein</topology>
    </subcellularLocation>
</comment>
<comment type="tissue specificity">
    <text evidence="6">Expressed in lung, liver and lymphoid cells.</text>
</comment>
<comment type="domain">
    <text evidence="6">The PH domain is required for localization to the membrane.</text>
</comment>
<comment type="sequence caution" evidence="7">
    <conflict type="frameshift">
        <sequence resource="EMBL-CDS" id="AAF67618"/>
    </conflict>
</comment>
<comment type="sequence caution" evidence="7">
    <conflict type="frameshift">
        <sequence resource="EMBL-CDS" id="AAF67633"/>
    </conflict>
</comment>
<comment type="sequence caution" evidence="7">
    <conflict type="frameshift">
        <sequence resource="EMBL-CDS" id="AAF87324"/>
    </conflict>
</comment>
<dbReference type="EMBL" id="AY219338">
    <property type="protein sequence ID" value="AAO34684.1"/>
    <property type="molecule type" value="mRNA"/>
</dbReference>
<dbReference type="EMBL" id="AF212222">
    <property type="protein sequence ID" value="AAF87324.1"/>
    <property type="status" value="ALT_FRAME"/>
    <property type="molecule type" value="mRNA"/>
</dbReference>
<dbReference type="EMBL" id="AF217507">
    <property type="protein sequence ID" value="AAF67618.1"/>
    <property type="status" value="ALT_FRAME"/>
    <property type="molecule type" value="mRNA"/>
</dbReference>
<dbReference type="EMBL" id="AF217522">
    <property type="protein sequence ID" value="AAF67633.1"/>
    <property type="status" value="ALT_FRAME"/>
    <property type="molecule type" value="mRNA"/>
</dbReference>
<dbReference type="EMBL" id="AC013437">
    <property type="protein sequence ID" value="AAX93160.1"/>
    <property type="molecule type" value="Genomic_DNA"/>
</dbReference>
<dbReference type="EMBL" id="AC079584">
    <property type="protein sequence ID" value="AAX82009.1"/>
    <property type="molecule type" value="Genomic_DNA"/>
</dbReference>
<dbReference type="EMBL" id="AC079793">
    <property type="protein sequence ID" value="AAY24215.1"/>
    <property type="molecule type" value="Genomic_DNA"/>
</dbReference>
<dbReference type="EMBL" id="AC092652">
    <property type="protein sequence ID" value="AAY14811.1"/>
    <property type="molecule type" value="Genomic_DNA"/>
</dbReference>
<dbReference type="EMBL" id="AC096558">
    <property type="protein sequence ID" value="AAX93158.1"/>
    <property type="molecule type" value="Genomic_DNA"/>
</dbReference>
<dbReference type="EMBL" id="AC098857">
    <property type="protein sequence ID" value="AAX93245.1"/>
    <property type="molecule type" value="Genomic_DNA"/>
</dbReference>
<dbReference type="EMBL" id="CH471058">
    <property type="protein sequence ID" value="EAX11590.1"/>
    <property type="molecule type" value="Genomic_DNA"/>
</dbReference>
<dbReference type="EMBL" id="BC016701">
    <property type="protein sequence ID" value="AAH16701.1"/>
    <property type="molecule type" value="mRNA"/>
</dbReference>
<dbReference type="EMBL" id="BC038976">
    <property type="protein sequence ID" value="AAH38976.2"/>
    <property type="molecule type" value="mRNA"/>
</dbReference>
<dbReference type="CCDS" id="CCDS2184.1"/>
<dbReference type="RefSeq" id="NP_060930.3">
    <property type="nucleotide sequence ID" value="NM_018460.3"/>
</dbReference>
<dbReference type="RefSeq" id="XP_011509781.1">
    <property type="nucleotide sequence ID" value="XM_011511479.2"/>
</dbReference>
<dbReference type="RefSeq" id="XP_016859988.1">
    <property type="nucleotide sequence ID" value="XM_017004499.1"/>
</dbReference>
<dbReference type="PDB" id="3BYI">
    <property type="method" value="X-ray"/>
    <property type="resolution" value="2.25 A"/>
    <property type="chains" value="A/B/C/D=262-473"/>
</dbReference>
<dbReference type="PDBsum" id="3BYI"/>
<dbReference type="SMR" id="Q53QZ3"/>
<dbReference type="BioGRID" id="120945">
    <property type="interactions" value="26"/>
</dbReference>
<dbReference type="FunCoup" id="Q53QZ3">
    <property type="interactions" value="1154"/>
</dbReference>
<dbReference type="IntAct" id="Q53QZ3">
    <property type="interactions" value="13"/>
</dbReference>
<dbReference type="MINT" id="Q53QZ3"/>
<dbReference type="STRING" id="9606.ENSP00000295095"/>
<dbReference type="GlyCosmos" id="Q53QZ3">
    <property type="glycosylation" value="1 site, 1 glycan"/>
</dbReference>
<dbReference type="GlyGen" id="Q53QZ3">
    <property type="glycosylation" value="2 sites, 1 O-linked glycan (1 site)"/>
</dbReference>
<dbReference type="iPTMnet" id="Q53QZ3"/>
<dbReference type="MetOSite" id="Q53QZ3"/>
<dbReference type="PhosphoSitePlus" id="Q53QZ3"/>
<dbReference type="BioMuta" id="ARHGAP15"/>
<dbReference type="DMDM" id="166977704"/>
<dbReference type="MassIVE" id="Q53QZ3"/>
<dbReference type="PaxDb" id="9606-ENSP00000295095"/>
<dbReference type="PeptideAtlas" id="Q53QZ3"/>
<dbReference type="ProteomicsDB" id="62513"/>
<dbReference type="Antibodypedia" id="33613">
    <property type="antibodies" value="123 antibodies from 20 providers"/>
</dbReference>
<dbReference type="DNASU" id="55843"/>
<dbReference type="Ensembl" id="ENST00000295095.11">
    <property type="protein sequence ID" value="ENSP00000295095.6"/>
    <property type="gene ID" value="ENSG00000075884.14"/>
</dbReference>
<dbReference type="GeneID" id="55843"/>
<dbReference type="KEGG" id="hsa:55843"/>
<dbReference type="MANE-Select" id="ENST00000295095.11">
    <property type="protein sequence ID" value="ENSP00000295095.6"/>
    <property type="RefSeq nucleotide sequence ID" value="NM_018460.4"/>
    <property type="RefSeq protein sequence ID" value="NP_060930.3"/>
</dbReference>
<dbReference type="UCSC" id="uc002tvm.5">
    <property type="organism name" value="human"/>
</dbReference>
<dbReference type="AGR" id="HGNC:21030"/>
<dbReference type="CTD" id="55843"/>
<dbReference type="DisGeNET" id="55843"/>
<dbReference type="GeneCards" id="ARHGAP15"/>
<dbReference type="HGNC" id="HGNC:21030">
    <property type="gene designation" value="ARHGAP15"/>
</dbReference>
<dbReference type="HPA" id="ENSG00000075884">
    <property type="expression patterns" value="Group enriched (bone marrow, lymphoid tissue)"/>
</dbReference>
<dbReference type="MIM" id="610578">
    <property type="type" value="gene"/>
</dbReference>
<dbReference type="neXtProt" id="NX_Q53QZ3"/>
<dbReference type="OpenTargets" id="ENSG00000075884"/>
<dbReference type="PharmGKB" id="PA134938065"/>
<dbReference type="VEuPathDB" id="HostDB:ENSG00000075884"/>
<dbReference type="eggNOG" id="KOG1449">
    <property type="taxonomic scope" value="Eukaryota"/>
</dbReference>
<dbReference type="eggNOG" id="KOG1450">
    <property type="taxonomic scope" value="Eukaryota"/>
</dbReference>
<dbReference type="GeneTree" id="ENSGT00950000182860"/>
<dbReference type="HOGENOM" id="CLU_015883_1_0_1"/>
<dbReference type="InParanoid" id="Q53QZ3"/>
<dbReference type="OMA" id="DHNQWED"/>
<dbReference type="OrthoDB" id="79452at2759"/>
<dbReference type="PAN-GO" id="Q53QZ3">
    <property type="GO annotations" value="2 GO annotations based on evolutionary models"/>
</dbReference>
<dbReference type="PhylomeDB" id="Q53QZ3"/>
<dbReference type="TreeFam" id="TF329345"/>
<dbReference type="PathwayCommons" id="Q53QZ3"/>
<dbReference type="Reactome" id="R-HSA-9013149">
    <property type="pathway name" value="RAC1 GTPase cycle"/>
</dbReference>
<dbReference type="Reactome" id="R-HSA-9013423">
    <property type="pathway name" value="RAC3 GTPase cycle"/>
</dbReference>
<dbReference type="SignaLink" id="Q53QZ3"/>
<dbReference type="SIGNOR" id="Q53QZ3"/>
<dbReference type="BioGRID-ORCS" id="55843">
    <property type="hits" value="22 hits in 1157 CRISPR screens"/>
</dbReference>
<dbReference type="ChiTaRS" id="ARHGAP15">
    <property type="organism name" value="human"/>
</dbReference>
<dbReference type="EvolutionaryTrace" id="Q53QZ3"/>
<dbReference type="GenomeRNAi" id="55843"/>
<dbReference type="Pharos" id="Q53QZ3">
    <property type="development level" value="Tbio"/>
</dbReference>
<dbReference type="PRO" id="PR:Q53QZ3"/>
<dbReference type="Proteomes" id="UP000005640">
    <property type="component" value="Chromosome 2"/>
</dbReference>
<dbReference type="RNAct" id="Q53QZ3">
    <property type="molecule type" value="protein"/>
</dbReference>
<dbReference type="Bgee" id="ENSG00000075884">
    <property type="expression patterns" value="Expressed in blood and 134 other cell types or tissues"/>
</dbReference>
<dbReference type="ExpressionAtlas" id="Q53QZ3">
    <property type="expression patterns" value="baseline and differential"/>
</dbReference>
<dbReference type="GO" id="GO:0005737">
    <property type="term" value="C:cytoplasm"/>
    <property type="evidence" value="ECO:0000318"/>
    <property type="project" value="GO_Central"/>
</dbReference>
<dbReference type="GO" id="GO:0005829">
    <property type="term" value="C:cytosol"/>
    <property type="evidence" value="ECO:0000304"/>
    <property type="project" value="Reactome"/>
</dbReference>
<dbReference type="GO" id="GO:0005654">
    <property type="term" value="C:nucleoplasm"/>
    <property type="evidence" value="ECO:0000314"/>
    <property type="project" value="HPA"/>
</dbReference>
<dbReference type="GO" id="GO:0005886">
    <property type="term" value="C:plasma membrane"/>
    <property type="evidence" value="ECO:0000314"/>
    <property type="project" value="HPA"/>
</dbReference>
<dbReference type="GO" id="GO:0005096">
    <property type="term" value="F:GTPase activator activity"/>
    <property type="evidence" value="ECO:0000314"/>
    <property type="project" value="MGI"/>
</dbReference>
<dbReference type="GO" id="GO:0008360">
    <property type="term" value="P:regulation of cell shape"/>
    <property type="evidence" value="ECO:0000314"/>
    <property type="project" value="MGI"/>
</dbReference>
<dbReference type="GO" id="GO:0051056">
    <property type="term" value="P:regulation of small GTPase mediated signal transduction"/>
    <property type="evidence" value="ECO:0000304"/>
    <property type="project" value="Reactome"/>
</dbReference>
<dbReference type="GO" id="GO:0007264">
    <property type="term" value="P:small GTPase-mediated signal transduction"/>
    <property type="evidence" value="ECO:0000318"/>
    <property type="project" value="GO_Central"/>
</dbReference>
<dbReference type="CDD" id="cd13233">
    <property type="entry name" value="PH_ARHGAP9-like"/>
    <property type="match status" value="1"/>
</dbReference>
<dbReference type="CDD" id="cd04403">
    <property type="entry name" value="RhoGAP_ARHGAP27_15_12_9"/>
    <property type="match status" value="1"/>
</dbReference>
<dbReference type="FunFam" id="1.10.555.10:FF:000003">
    <property type="entry name" value="Putative rho GTPase-activating protein 12"/>
    <property type="match status" value="1"/>
</dbReference>
<dbReference type="FunFam" id="2.30.29.30:FF:000260">
    <property type="entry name" value="Rho GTPase activating protein 15"/>
    <property type="match status" value="1"/>
</dbReference>
<dbReference type="Gene3D" id="2.30.29.30">
    <property type="entry name" value="Pleckstrin-homology domain (PH domain)/Phosphotyrosine-binding domain (PTB)"/>
    <property type="match status" value="1"/>
</dbReference>
<dbReference type="Gene3D" id="1.10.555.10">
    <property type="entry name" value="Rho GTPase activation protein"/>
    <property type="match status" value="1"/>
</dbReference>
<dbReference type="InterPro" id="IPR011993">
    <property type="entry name" value="PH-like_dom_sf"/>
</dbReference>
<dbReference type="InterPro" id="IPR001849">
    <property type="entry name" value="PH_domain"/>
</dbReference>
<dbReference type="InterPro" id="IPR050729">
    <property type="entry name" value="Rho-GAP"/>
</dbReference>
<dbReference type="InterPro" id="IPR008936">
    <property type="entry name" value="Rho_GTPase_activation_prot"/>
</dbReference>
<dbReference type="InterPro" id="IPR000198">
    <property type="entry name" value="RhoGAP_dom"/>
</dbReference>
<dbReference type="PANTHER" id="PTHR23176:SF108">
    <property type="entry name" value="RHO GTPASE-ACTIVATING PROTEIN 15"/>
    <property type="match status" value="1"/>
</dbReference>
<dbReference type="PANTHER" id="PTHR23176">
    <property type="entry name" value="RHO/RAC/CDC GTPASE-ACTIVATING PROTEIN"/>
    <property type="match status" value="1"/>
</dbReference>
<dbReference type="Pfam" id="PF00169">
    <property type="entry name" value="PH"/>
    <property type="match status" value="1"/>
</dbReference>
<dbReference type="Pfam" id="PF00620">
    <property type="entry name" value="RhoGAP"/>
    <property type="match status" value="1"/>
</dbReference>
<dbReference type="SMART" id="SM00233">
    <property type="entry name" value="PH"/>
    <property type="match status" value="1"/>
</dbReference>
<dbReference type="SMART" id="SM00324">
    <property type="entry name" value="RhoGAP"/>
    <property type="match status" value="1"/>
</dbReference>
<dbReference type="SUPFAM" id="SSF48350">
    <property type="entry name" value="GTPase activation domain, GAP"/>
    <property type="match status" value="1"/>
</dbReference>
<dbReference type="SUPFAM" id="SSF50729">
    <property type="entry name" value="PH domain-like"/>
    <property type="match status" value="1"/>
</dbReference>
<dbReference type="PROSITE" id="PS50003">
    <property type="entry name" value="PH_DOMAIN"/>
    <property type="match status" value="1"/>
</dbReference>
<dbReference type="PROSITE" id="PS50238">
    <property type="entry name" value="RHOGAP"/>
    <property type="match status" value="1"/>
</dbReference>
<gene>
    <name type="primary">ARHGAP15</name>
    <name type="ORF">BM-024</name>
    <name type="ORF">BM-030</name>
    <name type="ORF">BM-046</name>
</gene>
<sequence>MQKSTNSDTSVETLNSTRQGTGAVQMRIKNANSHHDRLSQSKSMILTDVGKVTEPISRHRRNHSQHILKDVIPPLEQLMVEKEGYLQKAKIADGGKKLRKNWSTSWIVLSSRRIEFYKESKQQALSNMKTGHKPESVDLCGAHIEWAKEKSSRKNVFQITTVSGNEFLLQSDIDFIILDWFHAIKNAIDRLPKDSSCPSRNLELFKIQRSSSTELLSHYDSDIKEQKPEHRKSLMFRLHHSASDTSDKNRVKSRLKKFITRRPSLKTLQEKGLIKDQIFGSHLHKVCERENSTVPWFVKQCIEAVEKRGLDVDGIYRVSGNLATIQKLRFIVNQEEKLNLDDSQWEDIHVVTGALKMFFRELPEPLFPYSFFEQFVEAIKKQDNNTRIEAVKSLVQKLPPPNRDTMKVLFGHLTKIVAKASKNLMSTQSLGIVFGPTLLRAENETGNMAIHMVYQNQIAELMLSEYSKIFGSEED</sequence>
<organism>
    <name type="scientific">Homo sapiens</name>
    <name type="common">Human</name>
    <dbReference type="NCBI Taxonomy" id="9606"/>
    <lineage>
        <taxon>Eukaryota</taxon>
        <taxon>Metazoa</taxon>
        <taxon>Chordata</taxon>
        <taxon>Craniata</taxon>
        <taxon>Vertebrata</taxon>
        <taxon>Euteleostomi</taxon>
        <taxon>Mammalia</taxon>
        <taxon>Eutheria</taxon>
        <taxon>Euarchontoglires</taxon>
        <taxon>Primates</taxon>
        <taxon>Haplorrhini</taxon>
        <taxon>Catarrhini</taxon>
        <taxon>Hominidae</taxon>
        <taxon>Homo</taxon>
    </lineage>
</organism>
<evidence type="ECO:0000250" key="1">
    <source>
        <dbReference type="UniProtKB" id="Q6AYC5"/>
    </source>
</evidence>
<evidence type="ECO:0000250" key="2">
    <source>
        <dbReference type="UniProtKB" id="Q811M1"/>
    </source>
</evidence>
<evidence type="ECO:0000255" key="3">
    <source>
        <dbReference type="PROSITE-ProRule" id="PRU00145"/>
    </source>
</evidence>
<evidence type="ECO:0000255" key="4">
    <source>
        <dbReference type="PROSITE-ProRule" id="PRU00172"/>
    </source>
</evidence>
<evidence type="ECO:0000256" key="5">
    <source>
        <dbReference type="SAM" id="MobiDB-lite"/>
    </source>
</evidence>
<evidence type="ECO:0000269" key="6">
    <source>
    </source>
</evidence>
<evidence type="ECO:0000305" key="7"/>
<evidence type="ECO:0007744" key="8">
    <source>
    </source>
</evidence>
<evidence type="ECO:0007744" key="9">
    <source>
    </source>
</evidence>
<evidence type="ECO:0007829" key="10">
    <source>
        <dbReference type="PDB" id="3BYI"/>
    </source>
</evidence>
<feature type="chain" id="PRO_0000317574" description="Rho GTPase-activating protein 15">
    <location>
        <begin position="1"/>
        <end position="475"/>
    </location>
</feature>
<feature type="domain" description="PH" evidence="3">
    <location>
        <begin position="79"/>
        <end position="189"/>
    </location>
</feature>
<feature type="domain" description="Rho-GAP" evidence="4">
    <location>
        <begin position="281"/>
        <end position="470"/>
    </location>
</feature>
<feature type="region of interest" description="Disordered" evidence="5">
    <location>
        <begin position="1"/>
        <end position="23"/>
    </location>
</feature>
<feature type="compositionally biased region" description="Polar residues" evidence="5">
    <location>
        <begin position="1"/>
        <end position="22"/>
    </location>
</feature>
<feature type="site" description="Arginine finger; crucial for GTP hydrolysis by stabilizing the transition state" evidence="4">
    <location>
        <position position="317"/>
    </location>
</feature>
<feature type="modified residue" description="Phosphoserine" evidence="8 9">
    <location>
        <position position="43"/>
    </location>
</feature>
<feature type="modified residue" description="Phosphoserine" evidence="8">
    <location>
        <position position="103"/>
    </location>
</feature>
<feature type="modified residue" description="Phosphoserine" evidence="2">
    <location>
        <position position="196"/>
    </location>
</feature>
<feature type="modified residue" description="Phosphoserine" evidence="1">
    <location>
        <position position="199"/>
    </location>
</feature>
<feature type="modified residue" description="Phosphoserine" evidence="1">
    <location>
        <position position="243"/>
    </location>
</feature>
<feature type="sequence conflict" description="In Ref. 2; AAF67618." evidence="7" ref="2">
    <original>T</original>
    <variation>P</variation>
    <location>
        <position position="260"/>
    </location>
</feature>
<feature type="sequence conflict" description="In Ref. 2; AAF87324." evidence="7" ref="2">
    <original>R</original>
    <variation>P</variation>
    <location>
        <position position="261"/>
    </location>
</feature>
<feature type="sequence conflict" description="In Ref. 1; AAO34684." evidence="7" ref="1">
    <original>G</original>
    <variation>A</variation>
    <location>
        <position position="314"/>
    </location>
</feature>
<feature type="sequence conflict" description="In Ref. 2; AAF67618." evidence="7" ref="2">
    <original>A</original>
    <variation>G</variation>
    <location>
        <position position="323"/>
    </location>
</feature>
<feature type="sequence conflict" description="In Ref. 1; AAO34684." evidence="7" ref="1">
    <original>A</original>
    <variation>Q</variation>
    <location>
        <position position="323"/>
    </location>
</feature>
<feature type="sequence conflict" description="In Ref. 4; AAH16701." evidence="7" ref="4">
    <original>L</original>
    <variation>P</variation>
    <location>
        <position position="409"/>
    </location>
</feature>
<feature type="helix" evidence="10">
    <location>
        <begin position="265"/>
        <end position="270"/>
    </location>
</feature>
<feature type="helix" evidence="10">
    <location>
        <begin position="283"/>
        <end position="290"/>
    </location>
</feature>
<feature type="helix" evidence="10">
    <location>
        <begin position="296"/>
        <end position="308"/>
    </location>
</feature>
<feature type="turn" evidence="10">
    <location>
        <begin position="309"/>
        <end position="311"/>
    </location>
</feature>
<feature type="turn" evidence="10">
    <location>
        <begin position="313"/>
        <end position="317"/>
    </location>
</feature>
<feature type="helix" evidence="10">
    <location>
        <begin position="322"/>
        <end position="333"/>
    </location>
</feature>
<feature type="helix" evidence="10">
    <location>
        <begin position="343"/>
        <end position="345"/>
    </location>
</feature>
<feature type="helix" evidence="10">
    <location>
        <begin position="348"/>
        <end position="361"/>
    </location>
</feature>
<feature type="strand" evidence="10">
    <location>
        <begin position="362"/>
        <end position="364"/>
    </location>
</feature>
<feature type="helix" evidence="10">
    <location>
        <begin position="369"/>
        <end position="379"/>
    </location>
</feature>
<feature type="strand" evidence="10">
    <location>
        <begin position="381"/>
        <end position="383"/>
    </location>
</feature>
<feature type="helix" evidence="10">
    <location>
        <begin position="384"/>
        <end position="397"/>
    </location>
</feature>
<feature type="helix" evidence="10">
    <location>
        <begin position="400"/>
        <end position="418"/>
    </location>
</feature>
<feature type="helix" evidence="10">
    <location>
        <begin position="420"/>
        <end position="423"/>
    </location>
</feature>
<feature type="helix" evidence="10">
    <location>
        <begin position="427"/>
        <end position="439"/>
    </location>
</feature>
<feature type="strand" evidence="10">
    <location>
        <begin position="444"/>
        <end position="446"/>
    </location>
</feature>
<feature type="helix" evidence="10">
    <location>
        <begin position="448"/>
        <end position="464"/>
    </location>
</feature>
<feature type="helix" evidence="10">
    <location>
        <begin position="466"/>
        <end position="470"/>
    </location>
</feature>